<sequence>MKKEHVLHCQFSAWYPLFRSLTIKSVILPLPQNVKDYLLDDGTLVVSGREDPPAHSQPDSDDEAEEIQWSDDENTATLTAPEFPEFTTKVQEAINSLGGSVFPKLNWSAPRDAYWIAMNSSLKCKTLSDIFLLFKSSDFITRDFTQPFIHCTDDSPDPCMEYELVLRKWCELIPGAEFRCFVKENKLIGISQRDYTQYYDHISKQKEEICRCIQDFFKKHIQYKFLDEDFVFDIYRDSRGKVWLIDFNPFGEVTDSLLFTWDELLSGTNLKGDFSEEALEQDAPAFRCTNSEVTVQPSPYLSYRLPKDFVDLSTGEDAHKLIDFLKLKRNQQEDD</sequence>
<name>CD123_BOVIN</name>
<gene>
    <name type="primary">CDC123</name>
</gene>
<keyword id="KW-0067">ATP-binding</keyword>
<keyword id="KW-0143">Chaperone</keyword>
<keyword id="KW-0963">Cytoplasm</keyword>
<keyword id="KW-0460">Magnesium</keyword>
<keyword id="KW-0479">Metal-binding</keyword>
<keyword id="KW-0547">Nucleotide-binding</keyword>
<keyword id="KW-0597">Phosphoprotein</keyword>
<keyword id="KW-1185">Reference proteome</keyword>
<reference key="1">
    <citation type="submission" date="2005-11" db="EMBL/GenBank/DDBJ databases">
        <authorList>
            <consortium name="NIH - Mammalian Gene Collection (MGC) project"/>
        </authorList>
    </citation>
    <scope>NUCLEOTIDE SEQUENCE [LARGE SCALE MRNA]</scope>
    <source>
        <strain>Crossbred X Angus</strain>
        <tissue>Liver</tissue>
    </source>
</reference>
<accession>Q2YDG3</accession>
<feature type="chain" id="PRO_0000228661" description="Translation initiation factor eIF2 assembly protein">
    <location>
        <begin position="1"/>
        <end position="335"/>
    </location>
</feature>
<feature type="binding site" evidence="2">
    <location>
        <position position="104"/>
    </location>
    <ligand>
        <name>ATP</name>
        <dbReference type="ChEBI" id="CHEBI:30616"/>
    </ligand>
</feature>
<feature type="binding site" evidence="2">
    <location>
        <position position="107"/>
    </location>
    <ligand>
        <name>ATP</name>
        <dbReference type="ChEBI" id="CHEBI:30616"/>
    </ligand>
</feature>
<feature type="binding site" evidence="2">
    <location>
        <position position="109"/>
    </location>
    <ligand>
        <name>ATP</name>
        <dbReference type="ChEBI" id="CHEBI:30616"/>
    </ligand>
</feature>
<feature type="binding site" evidence="5">
    <location>
        <position position="111"/>
    </location>
    <ligand>
        <name>ATP</name>
        <dbReference type="ChEBI" id="CHEBI:30616"/>
    </ligand>
</feature>
<feature type="binding site" evidence="5">
    <location>
        <position position="167"/>
    </location>
    <ligand>
        <name>ATP</name>
        <dbReference type="ChEBI" id="CHEBI:30616"/>
    </ligand>
</feature>
<feature type="binding site" evidence="2">
    <location>
        <position position="168"/>
    </location>
    <ligand>
        <name>ATP</name>
        <dbReference type="ChEBI" id="CHEBI:30616"/>
    </ligand>
</feature>
<feature type="binding site" evidence="5">
    <location>
        <position position="169"/>
    </location>
    <ligand>
        <name>ATP</name>
        <dbReference type="ChEBI" id="CHEBI:30616"/>
    </ligand>
</feature>
<feature type="binding site" evidence="2">
    <location>
        <position position="170"/>
    </location>
    <ligand>
        <name>ATP</name>
        <dbReference type="ChEBI" id="CHEBI:30616"/>
    </ligand>
</feature>
<feature type="binding site" evidence="2">
    <location>
        <position position="177"/>
    </location>
    <ligand>
        <name>ATP</name>
        <dbReference type="ChEBI" id="CHEBI:30616"/>
    </ligand>
</feature>
<feature type="binding site" evidence="2">
    <location>
        <position position="179"/>
    </location>
    <ligand>
        <name>ATP</name>
        <dbReference type="ChEBI" id="CHEBI:30616"/>
    </ligand>
</feature>
<feature type="binding site" evidence="2">
    <location>
        <position position="193"/>
    </location>
    <ligand>
        <name>ATP</name>
        <dbReference type="ChEBI" id="CHEBI:30616"/>
    </ligand>
</feature>
<feature type="binding site" evidence="5">
    <location>
        <position position="233"/>
    </location>
    <ligand>
        <name>ATP</name>
        <dbReference type="ChEBI" id="CHEBI:30616"/>
    </ligand>
</feature>
<feature type="binding site" evidence="2">
    <location>
        <position position="246"/>
    </location>
    <ligand>
        <name>ATP</name>
        <dbReference type="ChEBI" id="CHEBI:30616"/>
    </ligand>
</feature>
<feature type="binding site" evidence="2">
    <location>
        <position position="246"/>
    </location>
    <ligand>
        <name>Mg(2+)</name>
        <dbReference type="ChEBI" id="CHEBI:18420"/>
    </ligand>
</feature>
<feature type="binding site" evidence="2">
    <location>
        <position position="248"/>
    </location>
    <ligand>
        <name>ATP</name>
        <dbReference type="ChEBI" id="CHEBI:30616"/>
    </ligand>
</feature>
<feature type="binding site" evidence="2">
    <location>
        <position position="248"/>
    </location>
    <ligand>
        <name>Mg(2+)</name>
        <dbReference type="ChEBI" id="CHEBI:18420"/>
    </ligand>
</feature>
<feature type="modified residue" description="Phosphoserine" evidence="2">
    <location>
        <position position="60"/>
    </location>
</feature>
<protein>
    <recommendedName>
        <fullName evidence="6">Translation initiation factor eIF2 assembly protein</fullName>
    </recommendedName>
    <alternativeName>
        <fullName>Cell division cycle protein 123 homolog</fullName>
    </alternativeName>
</protein>
<dbReference type="EMBL" id="BC110235">
    <property type="protein sequence ID" value="AAI10236.1"/>
    <property type="molecule type" value="mRNA"/>
</dbReference>
<dbReference type="RefSeq" id="NP_001073743.1">
    <property type="nucleotide sequence ID" value="NM_001080274.2"/>
</dbReference>
<dbReference type="SMR" id="Q2YDG3"/>
<dbReference type="FunCoup" id="Q2YDG3">
    <property type="interactions" value="3753"/>
</dbReference>
<dbReference type="STRING" id="9913.ENSBTAP00000025992"/>
<dbReference type="PaxDb" id="9913-ENSBTAP00000025992"/>
<dbReference type="GeneID" id="514926"/>
<dbReference type="KEGG" id="bta:514926"/>
<dbReference type="CTD" id="8872"/>
<dbReference type="VEuPathDB" id="HostDB:ENSBTAG00000019511"/>
<dbReference type="eggNOG" id="KOG2983">
    <property type="taxonomic scope" value="Eukaryota"/>
</dbReference>
<dbReference type="HOGENOM" id="CLU_034402_0_0_1"/>
<dbReference type="InParanoid" id="Q2YDG3"/>
<dbReference type="OMA" id="TFPDPNF"/>
<dbReference type="OrthoDB" id="360540at2759"/>
<dbReference type="TreeFam" id="TF323348"/>
<dbReference type="Proteomes" id="UP000009136">
    <property type="component" value="Chromosome 13"/>
</dbReference>
<dbReference type="Bgee" id="ENSBTAG00000019511">
    <property type="expression patterns" value="Expressed in tongue muscle and 105 other cell types or tissues"/>
</dbReference>
<dbReference type="GO" id="GO:0005737">
    <property type="term" value="C:cytoplasm"/>
    <property type="evidence" value="ECO:0000250"/>
    <property type="project" value="UniProtKB"/>
</dbReference>
<dbReference type="GO" id="GO:0005524">
    <property type="term" value="F:ATP binding"/>
    <property type="evidence" value="ECO:0000250"/>
    <property type="project" value="UniProtKB"/>
</dbReference>
<dbReference type="GO" id="GO:0000287">
    <property type="term" value="F:magnesium ion binding"/>
    <property type="evidence" value="ECO:0000250"/>
    <property type="project" value="UniProtKB"/>
</dbReference>
<dbReference type="GO" id="GO:0044183">
    <property type="term" value="F:protein folding chaperone"/>
    <property type="evidence" value="ECO:0000250"/>
    <property type="project" value="UniProtKB"/>
</dbReference>
<dbReference type="GO" id="GO:1905143">
    <property type="term" value="P:eukaryotic translation initiation factor 2 complex assembly"/>
    <property type="evidence" value="ECO:0000250"/>
    <property type="project" value="UniProtKB"/>
</dbReference>
<dbReference type="InterPro" id="IPR009772">
    <property type="entry name" value="CDC123"/>
</dbReference>
<dbReference type="PANTHER" id="PTHR15323:SF6">
    <property type="entry name" value="CELL DIVISION CYCLE PROTEIN 123 HOMOLOG"/>
    <property type="match status" value="1"/>
</dbReference>
<dbReference type="PANTHER" id="PTHR15323">
    <property type="entry name" value="D123 PROTEIN"/>
    <property type="match status" value="1"/>
</dbReference>
<dbReference type="Pfam" id="PF07065">
    <property type="entry name" value="D123"/>
    <property type="match status" value="1"/>
</dbReference>
<dbReference type="PIRSF" id="PIRSF007807">
    <property type="entry name" value="Cdc123"/>
    <property type="match status" value="1"/>
</dbReference>
<proteinExistence type="evidence at transcript level"/>
<comment type="function">
    <text evidence="2 3">ATP-dependent protein-folding chaperone for the eIF2 complex (By similarity). Binds to the gamma subunit of the eIF2 complex which allows the subunit to assemble with the alpha and beta subunits (By similarity).</text>
</comment>
<comment type="subunit">
    <text evidence="2">Interacts with the eIF2 complex gamma subunit EIF2S3 (via C-terminus); the interaction is direct. Interacts with the eIF2 complex alpha subunit EIF2S1. Interacts with the eIF2 complex beta subunit EIF2S2.</text>
</comment>
<comment type="subcellular location">
    <subcellularLocation>
        <location evidence="4">Cytoplasm</location>
    </subcellularLocation>
</comment>
<comment type="PTM">
    <text evidence="1">Phosphorylated.</text>
</comment>
<comment type="similarity">
    <text evidence="6">Belongs to the CDC123 family.</text>
</comment>
<organism>
    <name type="scientific">Bos taurus</name>
    <name type="common">Bovine</name>
    <dbReference type="NCBI Taxonomy" id="9913"/>
    <lineage>
        <taxon>Eukaryota</taxon>
        <taxon>Metazoa</taxon>
        <taxon>Chordata</taxon>
        <taxon>Craniata</taxon>
        <taxon>Vertebrata</taxon>
        <taxon>Euteleostomi</taxon>
        <taxon>Mammalia</taxon>
        <taxon>Eutheria</taxon>
        <taxon>Laurasiatheria</taxon>
        <taxon>Artiodactyla</taxon>
        <taxon>Ruminantia</taxon>
        <taxon>Pecora</taxon>
        <taxon>Bovidae</taxon>
        <taxon>Bovinae</taxon>
        <taxon>Bos</taxon>
    </lineage>
</organism>
<evidence type="ECO:0000250" key="1"/>
<evidence type="ECO:0000250" key="2">
    <source>
        <dbReference type="UniProtKB" id="O75794"/>
    </source>
</evidence>
<evidence type="ECO:0000250" key="3">
    <source>
        <dbReference type="UniProtKB" id="Q05791"/>
    </source>
</evidence>
<evidence type="ECO:0000250" key="4">
    <source>
        <dbReference type="UniProtKB" id="Q62834"/>
    </source>
</evidence>
<evidence type="ECO:0000250" key="5">
    <source>
        <dbReference type="UniProtKB" id="Q9P7N5"/>
    </source>
</evidence>
<evidence type="ECO:0000305" key="6"/>